<name>GATA_BREBN</name>
<sequence length="490" mass="52982">MSLFDKRLSEIHSALRAKEISVTDLVQASIASIKEHDGEIKSVLHVDEEGALAHARQLDERLVKGNEELGLLYGLPAGLKDNLVTKDIRTTCASKFLANYDPVHDGTVSKKVKDADSVIVAKLNMDEFAMGGSNENSGFFPAKNPWNTDYVPGGSSGGSAAAMAARHFYYTLGSDTGGSIRQPAAFCGVVGLKPTYGRVSRFGLVAFASSLDQIGPVTKNVEDSAYVLQAIAGHDEYDSTSANVDVPNYLSALTGDVKGLRIGVPKELIGEGIDPEVRDAVLAALKQLESMGATWSEVSMPHTEYAVPAYYLLSSSEASSNLARFDGVRYGVRADNAANLIELYKESRSQGFGQEVKRRIMLGTYALSSGYYDAYYKKAQQVRTLIIQDFNSIFADYDVILHPTTPSTAFKVGENVDDPVKMYLEDICTVPVNLAGLPAISVPCGFSKNGLPIGLQIVGRAFDESTVLRVAHAYEQTAGFYGRKPEWVRG</sequence>
<accession>C0Z4E4</accession>
<protein>
    <recommendedName>
        <fullName evidence="1">Glutamyl-tRNA(Gln) amidotransferase subunit A</fullName>
        <shortName evidence="1">Glu-ADT subunit A</shortName>
        <ecNumber evidence="1">6.3.5.7</ecNumber>
    </recommendedName>
</protein>
<organism>
    <name type="scientific">Brevibacillus brevis (strain 47 / JCM 6285 / NBRC 100599)</name>
    <dbReference type="NCBI Taxonomy" id="358681"/>
    <lineage>
        <taxon>Bacteria</taxon>
        <taxon>Bacillati</taxon>
        <taxon>Bacillota</taxon>
        <taxon>Bacilli</taxon>
        <taxon>Bacillales</taxon>
        <taxon>Paenibacillaceae</taxon>
        <taxon>Brevibacillus</taxon>
    </lineage>
</organism>
<feature type="chain" id="PRO_1000122468" description="Glutamyl-tRNA(Gln) amidotransferase subunit A">
    <location>
        <begin position="1"/>
        <end position="490"/>
    </location>
</feature>
<feature type="active site" description="Charge relay system" evidence="1">
    <location>
        <position position="80"/>
    </location>
</feature>
<feature type="active site" description="Charge relay system" evidence="1">
    <location>
        <position position="155"/>
    </location>
</feature>
<feature type="active site" description="Acyl-ester intermediate" evidence="1">
    <location>
        <position position="179"/>
    </location>
</feature>
<keyword id="KW-0067">ATP-binding</keyword>
<keyword id="KW-0436">Ligase</keyword>
<keyword id="KW-0547">Nucleotide-binding</keyword>
<keyword id="KW-0648">Protein biosynthesis</keyword>
<keyword id="KW-1185">Reference proteome</keyword>
<dbReference type="EC" id="6.3.5.7" evidence="1"/>
<dbReference type="EMBL" id="AP008955">
    <property type="protein sequence ID" value="BAH41671.1"/>
    <property type="molecule type" value="Genomic_DNA"/>
</dbReference>
<dbReference type="RefSeq" id="WP_012684434.1">
    <property type="nucleotide sequence ID" value="NC_012491.1"/>
</dbReference>
<dbReference type="SMR" id="C0Z4E4"/>
<dbReference type="STRING" id="358681.BBR47_06940"/>
<dbReference type="KEGG" id="bbe:BBR47_06940"/>
<dbReference type="eggNOG" id="COG0154">
    <property type="taxonomic scope" value="Bacteria"/>
</dbReference>
<dbReference type="HOGENOM" id="CLU_009600_0_3_9"/>
<dbReference type="Proteomes" id="UP000001877">
    <property type="component" value="Chromosome"/>
</dbReference>
<dbReference type="GO" id="GO:0030956">
    <property type="term" value="C:glutamyl-tRNA(Gln) amidotransferase complex"/>
    <property type="evidence" value="ECO:0007669"/>
    <property type="project" value="InterPro"/>
</dbReference>
<dbReference type="GO" id="GO:0005524">
    <property type="term" value="F:ATP binding"/>
    <property type="evidence" value="ECO:0007669"/>
    <property type="project" value="UniProtKB-KW"/>
</dbReference>
<dbReference type="GO" id="GO:0050567">
    <property type="term" value="F:glutaminyl-tRNA synthase (glutamine-hydrolyzing) activity"/>
    <property type="evidence" value="ECO:0007669"/>
    <property type="project" value="UniProtKB-UniRule"/>
</dbReference>
<dbReference type="GO" id="GO:0006412">
    <property type="term" value="P:translation"/>
    <property type="evidence" value="ECO:0007669"/>
    <property type="project" value="UniProtKB-UniRule"/>
</dbReference>
<dbReference type="Gene3D" id="3.90.1300.10">
    <property type="entry name" value="Amidase signature (AS) domain"/>
    <property type="match status" value="1"/>
</dbReference>
<dbReference type="HAMAP" id="MF_00120">
    <property type="entry name" value="GatA"/>
    <property type="match status" value="1"/>
</dbReference>
<dbReference type="InterPro" id="IPR000120">
    <property type="entry name" value="Amidase"/>
</dbReference>
<dbReference type="InterPro" id="IPR020556">
    <property type="entry name" value="Amidase_CS"/>
</dbReference>
<dbReference type="InterPro" id="IPR023631">
    <property type="entry name" value="Amidase_dom"/>
</dbReference>
<dbReference type="InterPro" id="IPR036928">
    <property type="entry name" value="AS_sf"/>
</dbReference>
<dbReference type="InterPro" id="IPR004412">
    <property type="entry name" value="GatA"/>
</dbReference>
<dbReference type="NCBIfam" id="TIGR00132">
    <property type="entry name" value="gatA"/>
    <property type="match status" value="1"/>
</dbReference>
<dbReference type="PANTHER" id="PTHR11895:SF151">
    <property type="entry name" value="GLUTAMYL-TRNA(GLN) AMIDOTRANSFERASE SUBUNIT A"/>
    <property type="match status" value="1"/>
</dbReference>
<dbReference type="PANTHER" id="PTHR11895">
    <property type="entry name" value="TRANSAMIDASE"/>
    <property type="match status" value="1"/>
</dbReference>
<dbReference type="Pfam" id="PF01425">
    <property type="entry name" value="Amidase"/>
    <property type="match status" value="1"/>
</dbReference>
<dbReference type="SUPFAM" id="SSF75304">
    <property type="entry name" value="Amidase signature (AS) enzymes"/>
    <property type="match status" value="1"/>
</dbReference>
<dbReference type="PROSITE" id="PS00571">
    <property type="entry name" value="AMIDASES"/>
    <property type="match status" value="1"/>
</dbReference>
<evidence type="ECO:0000255" key="1">
    <source>
        <dbReference type="HAMAP-Rule" id="MF_00120"/>
    </source>
</evidence>
<gene>
    <name evidence="1" type="primary">gatA</name>
    <name type="ordered locus">BBR47_06940</name>
</gene>
<proteinExistence type="inferred from homology"/>
<comment type="function">
    <text evidence="1">Allows the formation of correctly charged Gln-tRNA(Gln) through the transamidation of misacylated Glu-tRNA(Gln) in organisms which lack glutaminyl-tRNA synthetase. The reaction takes place in the presence of glutamine and ATP through an activated gamma-phospho-Glu-tRNA(Gln).</text>
</comment>
<comment type="catalytic activity">
    <reaction evidence="1">
        <text>L-glutamyl-tRNA(Gln) + L-glutamine + ATP + H2O = L-glutaminyl-tRNA(Gln) + L-glutamate + ADP + phosphate + H(+)</text>
        <dbReference type="Rhea" id="RHEA:17521"/>
        <dbReference type="Rhea" id="RHEA-COMP:9681"/>
        <dbReference type="Rhea" id="RHEA-COMP:9684"/>
        <dbReference type="ChEBI" id="CHEBI:15377"/>
        <dbReference type="ChEBI" id="CHEBI:15378"/>
        <dbReference type="ChEBI" id="CHEBI:29985"/>
        <dbReference type="ChEBI" id="CHEBI:30616"/>
        <dbReference type="ChEBI" id="CHEBI:43474"/>
        <dbReference type="ChEBI" id="CHEBI:58359"/>
        <dbReference type="ChEBI" id="CHEBI:78520"/>
        <dbReference type="ChEBI" id="CHEBI:78521"/>
        <dbReference type="ChEBI" id="CHEBI:456216"/>
        <dbReference type="EC" id="6.3.5.7"/>
    </reaction>
</comment>
<comment type="subunit">
    <text evidence="1">Heterotrimer of A, B and C subunits.</text>
</comment>
<comment type="similarity">
    <text evidence="1">Belongs to the amidase family. GatA subfamily.</text>
</comment>
<reference key="1">
    <citation type="submission" date="2005-03" db="EMBL/GenBank/DDBJ databases">
        <title>Brevibacillus brevis strain 47, complete genome.</title>
        <authorList>
            <person name="Hosoyama A."/>
            <person name="Yamada R."/>
            <person name="Hongo Y."/>
            <person name="Terui Y."/>
            <person name="Ankai A."/>
            <person name="Masuyama W."/>
            <person name="Sekiguchi M."/>
            <person name="Takeda T."/>
            <person name="Asano K."/>
            <person name="Ohji S."/>
            <person name="Ichikawa N."/>
            <person name="Narita S."/>
            <person name="Aoki N."/>
            <person name="Miura H."/>
            <person name="Matsushita S."/>
            <person name="Sekigawa T."/>
            <person name="Yamagata H."/>
            <person name="Yoshikawa H."/>
            <person name="Udaka S."/>
            <person name="Tanikawa S."/>
            <person name="Fujita N."/>
        </authorList>
    </citation>
    <scope>NUCLEOTIDE SEQUENCE [LARGE SCALE GENOMIC DNA]</scope>
    <source>
        <strain>47 / JCM 6285 / NBRC 100599</strain>
    </source>
</reference>